<reference key="1">
    <citation type="submission" date="2005-03" db="EMBL/GenBank/DDBJ databases">
        <title>Annotation of the Saccharomyces cerevisiae RM11-1a genome.</title>
        <authorList>
            <consortium name="The Broad Institute Genome Sequencing Platform"/>
            <person name="Birren B.W."/>
            <person name="Lander E.S."/>
            <person name="Galagan J.E."/>
            <person name="Nusbaum C."/>
            <person name="Devon K."/>
            <person name="Cuomo C."/>
            <person name="Jaffe D.B."/>
            <person name="Butler J."/>
            <person name="Alvarez P."/>
            <person name="Gnerre S."/>
            <person name="Grabherr M."/>
            <person name="Kleber M."/>
            <person name="Mauceli E.W."/>
            <person name="Brockman W."/>
            <person name="MacCallum I.A."/>
            <person name="Rounsley S."/>
            <person name="Young S.K."/>
            <person name="LaButti K."/>
            <person name="Pushparaj V."/>
            <person name="DeCaprio D."/>
            <person name="Crawford M."/>
            <person name="Koehrsen M."/>
            <person name="Engels R."/>
            <person name="Montgomery P."/>
            <person name="Pearson M."/>
            <person name="Howarth C."/>
            <person name="Larson L."/>
            <person name="Luoma S."/>
            <person name="White J."/>
            <person name="O'Leary S."/>
            <person name="Kodira C.D."/>
            <person name="Zeng Q."/>
            <person name="Yandava C."/>
            <person name="Alvarado L."/>
            <person name="Pratt S."/>
            <person name="Kruglyak L."/>
        </authorList>
    </citation>
    <scope>NUCLEOTIDE SEQUENCE [LARGE SCALE GENOMIC DNA]</scope>
    <source>
        <strain>RM11-1a</strain>
    </source>
</reference>
<evidence type="ECO:0000250" key="1"/>
<evidence type="ECO:0000255" key="2"/>
<evidence type="ECO:0000305" key="3"/>
<proteinExistence type="inferred from homology"/>
<keyword id="KW-0175">Coiled coil</keyword>
<keyword id="KW-0967">Endosome</keyword>
<keyword id="KW-0813">Transport</keyword>
<organism>
    <name type="scientific">Saccharomyces cerevisiae (strain RM11-1a)</name>
    <name type="common">Baker's yeast</name>
    <dbReference type="NCBI Taxonomy" id="285006"/>
    <lineage>
        <taxon>Eukaryota</taxon>
        <taxon>Fungi</taxon>
        <taxon>Dikarya</taxon>
        <taxon>Ascomycota</taxon>
        <taxon>Saccharomycotina</taxon>
        <taxon>Saccharomycetes</taxon>
        <taxon>Saccharomycetales</taxon>
        <taxon>Saccharomycetaceae</taxon>
        <taxon>Saccharomyces</taxon>
    </lineage>
</organism>
<protein>
    <recommendedName>
        <fullName>Biogenesis of lysosome-related organelles complex 1 subunit BLI1</fullName>
        <shortName>BLOC-1 subunit BLI1</shortName>
    </recommendedName>
    <alternativeName>
        <fullName>BLOC-1 interactor 1</fullName>
    </alternativeName>
</protein>
<name>BLI1_YEAS1</name>
<accession>B3LR30</accession>
<gene>
    <name type="primary">BLI1</name>
    <name type="ORF">SCRG_03959</name>
</gene>
<comment type="function">
    <text evidence="1">Component of the biogenesis of lysosome-related organelles complex-1 (BLOC-1) involved in endosomal cargo sorting.</text>
</comment>
<comment type="subunit">
    <text evidence="1">Component of the biogenesis of lysosome-related organelles complex-1 (BLOC-1) composed of at least BLI1, BLS1, CNL1, KXD1, SNN1 and VAB2.</text>
</comment>
<comment type="subcellular location">
    <subcellularLocation>
        <location evidence="1">Endosome</location>
    </subcellularLocation>
</comment>
<comment type="similarity">
    <text evidence="3">Belongs to the BLI1 family.</text>
</comment>
<feature type="chain" id="PRO_0000410617" description="Biogenesis of lysosome-related organelles complex 1 subunit BLI1">
    <location>
        <begin position="1"/>
        <end position="113"/>
    </location>
</feature>
<feature type="coiled-coil region" evidence="2">
    <location>
        <begin position="57"/>
        <end position="97"/>
    </location>
</feature>
<sequence>MGEQNKLYYDVEKLVNSLQESFDLDCAQSVSLFTSKSRSNEAWLEELENKFKLKDDVELDDVENLRAEIDMKLNMLEDKVSYYERLYKELEEFQNEIKIKTVVNNRRQSRTPK</sequence>
<dbReference type="EMBL" id="CH408051">
    <property type="protein sequence ID" value="EDV13033.1"/>
    <property type="molecule type" value="Genomic_DNA"/>
</dbReference>
<dbReference type="HOGENOM" id="CLU_168467_0_0_1"/>
<dbReference type="OrthoDB" id="30837at4893"/>
<dbReference type="Proteomes" id="UP000008335">
    <property type="component" value="Unassembled WGS sequence"/>
</dbReference>
<dbReference type="GO" id="GO:0005768">
    <property type="term" value="C:endosome"/>
    <property type="evidence" value="ECO:0007669"/>
    <property type="project" value="UniProtKB-SubCell"/>
</dbReference>
<dbReference type="InterPro" id="IPR020491">
    <property type="entry name" value="BLI1"/>
</dbReference>
<dbReference type="Pfam" id="PF17324">
    <property type="entry name" value="BLI1"/>
    <property type="match status" value="1"/>
</dbReference>